<comment type="function">
    <text evidence="1">Catalyzes the transfer of a dimethylallyl group onto the adenine at position 37 in tRNAs that read codons beginning with uridine, leading to the formation of N6-(dimethylallyl)adenosine (i(6)A).</text>
</comment>
<comment type="catalytic activity">
    <reaction evidence="1">
        <text>adenosine(37) in tRNA + dimethylallyl diphosphate = N(6)-dimethylallyladenosine(37) in tRNA + diphosphate</text>
        <dbReference type="Rhea" id="RHEA:26482"/>
        <dbReference type="Rhea" id="RHEA-COMP:10162"/>
        <dbReference type="Rhea" id="RHEA-COMP:10375"/>
        <dbReference type="ChEBI" id="CHEBI:33019"/>
        <dbReference type="ChEBI" id="CHEBI:57623"/>
        <dbReference type="ChEBI" id="CHEBI:74411"/>
        <dbReference type="ChEBI" id="CHEBI:74415"/>
        <dbReference type="EC" id="2.5.1.75"/>
    </reaction>
</comment>
<comment type="cofactor">
    <cofactor evidence="1">
        <name>Mg(2+)</name>
        <dbReference type="ChEBI" id="CHEBI:18420"/>
    </cofactor>
</comment>
<comment type="subunit">
    <text evidence="1">Monomer.</text>
</comment>
<comment type="similarity">
    <text evidence="1">Belongs to the IPP transferase family.</text>
</comment>
<comment type="sequence caution" evidence="2">
    <conflict type="erroneous initiation">
        <sequence resource="EMBL-CDS" id="ABB45086"/>
    </conflict>
</comment>
<name>MIAA_SULDN</name>
<gene>
    <name evidence="1" type="primary">miaA</name>
    <name type="ordered locus">Suden_1812</name>
</gene>
<protein>
    <recommendedName>
        <fullName evidence="1">tRNA dimethylallyltransferase</fullName>
        <ecNumber evidence="1">2.5.1.75</ecNumber>
    </recommendedName>
    <alternativeName>
        <fullName evidence="1">Dimethylallyl diphosphate:tRNA dimethylallyltransferase</fullName>
        <shortName evidence="1">DMAPP:tRNA dimethylallyltransferase</shortName>
        <shortName evidence="1">DMATase</shortName>
    </alternativeName>
    <alternativeName>
        <fullName evidence="1">Isopentenyl-diphosphate:tRNA isopentenyltransferase</fullName>
        <shortName evidence="1">IPP transferase</shortName>
        <shortName evidence="1">IPPT</shortName>
        <shortName evidence="1">IPTase</shortName>
    </alternativeName>
</protein>
<organism>
    <name type="scientific">Sulfurimonas denitrificans (strain ATCC 33889 / DSM 1251)</name>
    <name type="common">Thiomicrospira denitrificans (strain ATCC 33889 / DSM 1251)</name>
    <dbReference type="NCBI Taxonomy" id="326298"/>
    <lineage>
        <taxon>Bacteria</taxon>
        <taxon>Pseudomonadati</taxon>
        <taxon>Campylobacterota</taxon>
        <taxon>Epsilonproteobacteria</taxon>
        <taxon>Campylobacterales</taxon>
        <taxon>Sulfurimonadaceae</taxon>
        <taxon>Sulfurimonas</taxon>
    </lineage>
</organism>
<reference key="1">
    <citation type="journal article" date="2008" name="Appl. Environ. Microbiol.">
        <title>Genome of the epsilonproteobacterial chemolithoautotroph Sulfurimonas denitrificans.</title>
        <authorList>
            <person name="Sievert S.M."/>
            <person name="Scott K.M."/>
            <person name="Klotz M.G."/>
            <person name="Chain P.S.G."/>
            <person name="Hauser L.J."/>
            <person name="Hemp J."/>
            <person name="Huegler M."/>
            <person name="Land M."/>
            <person name="Lapidus A."/>
            <person name="Larimer F.W."/>
            <person name="Lucas S."/>
            <person name="Malfatti S.A."/>
            <person name="Meyer F."/>
            <person name="Paulsen I.T."/>
            <person name="Ren Q."/>
            <person name="Simon J."/>
            <person name="Bailey K."/>
            <person name="Diaz E."/>
            <person name="Fitzpatrick K.A."/>
            <person name="Glover B."/>
            <person name="Gwatney N."/>
            <person name="Korajkic A."/>
            <person name="Long A."/>
            <person name="Mobberley J.M."/>
            <person name="Pantry S.N."/>
            <person name="Pazder G."/>
            <person name="Peterson S."/>
            <person name="Quintanilla J.D."/>
            <person name="Sprinkle R."/>
            <person name="Stephens J."/>
            <person name="Thomas P."/>
            <person name="Vaughn R."/>
            <person name="Weber M.J."/>
            <person name="Wooten L.L."/>
        </authorList>
    </citation>
    <scope>NUCLEOTIDE SEQUENCE [LARGE SCALE GENOMIC DNA]</scope>
    <source>
        <strain>ATCC 33889 / DSM 1251</strain>
    </source>
</reference>
<accession>Q30PJ5</accession>
<proteinExistence type="inferred from homology"/>
<evidence type="ECO:0000255" key="1">
    <source>
        <dbReference type="HAMAP-Rule" id="MF_00185"/>
    </source>
</evidence>
<evidence type="ECO:0000305" key="2"/>
<keyword id="KW-0067">ATP-binding</keyword>
<keyword id="KW-0460">Magnesium</keyword>
<keyword id="KW-0547">Nucleotide-binding</keyword>
<keyword id="KW-1185">Reference proteome</keyword>
<keyword id="KW-0808">Transferase</keyword>
<keyword id="KW-0819">tRNA processing</keyword>
<dbReference type="EC" id="2.5.1.75" evidence="1"/>
<dbReference type="EMBL" id="CP000153">
    <property type="protein sequence ID" value="ABB45086.1"/>
    <property type="status" value="ALT_INIT"/>
    <property type="molecule type" value="Genomic_DNA"/>
</dbReference>
<dbReference type="RefSeq" id="WP_041672565.1">
    <property type="nucleotide sequence ID" value="NC_007575.1"/>
</dbReference>
<dbReference type="SMR" id="Q30PJ5"/>
<dbReference type="STRING" id="326298.Suden_1812"/>
<dbReference type="KEGG" id="tdn:Suden_1812"/>
<dbReference type="eggNOG" id="COG0324">
    <property type="taxonomic scope" value="Bacteria"/>
</dbReference>
<dbReference type="HOGENOM" id="CLU_032616_0_1_7"/>
<dbReference type="OrthoDB" id="9776390at2"/>
<dbReference type="Proteomes" id="UP000002714">
    <property type="component" value="Chromosome"/>
</dbReference>
<dbReference type="GO" id="GO:0005524">
    <property type="term" value="F:ATP binding"/>
    <property type="evidence" value="ECO:0007669"/>
    <property type="project" value="UniProtKB-UniRule"/>
</dbReference>
<dbReference type="GO" id="GO:0052381">
    <property type="term" value="F:tRNA dimethylallyltransferase activity"/>
    <property type="evidence" value="ECO:0007669"/>
    <property type="project" value="UniProtKB-UniRule"/>
</dbReference>
<dbReference type="GO" id="GO:0006400">
    <property type="term" value="P:tRNA modification"/>
    <property type="evidence" value="ECO:0007669"/>
    <property type="project" value="TreeGrafter"/>
</dbReference>
<dbReference type="Gene3D" id="1.10.287.890">
    <property type="entry name" value="Crystal structure of tRNA isopentenylpyrophosphate transferase (bh2366) domain"/>
    <property type="match status" value="1"/>
</dbReference>
<dbReference type="Gene3D" id="3.40.50.300">
    <property type="entry name" value="P-loop containing nucleotide triphosphate hydrolases"/>
    <property type="match status" value="1"/>
</dbReference>
<dbReference type="HAMAP" id="MF_00185">
    <property type="entry name" value="IPP_trans"/>
    <property type="match status" value="1"/>
</dbReference>
<dbReference type="InterPro" id="IPR039657">
    <property type="entry name" value="Dimethylallyltransferase"/>
</dbReference>
<dbReference type="InterPro" id="IPR018022">
    <property type="entry name" value="IPT"/>
</dbReference>
<dbReference type="InterPro" id="IPR027417">
    <property type="entry name" value="P-loop_NTPase"/>
</dbReference>
<dbReference type="NCBIfam" id="TIGR00174">
    <property type="entry name" value="miaA"/>
    <property type="match status" value="1"/>
</dbReference>
<dbReference type="PANTHER" id="PTHR11088">
    <property type="entry name" value="TRNA DIMETHYLALLYLTRANSFERASE"/>
    <property type="match status" value="1"/>
</dbReference>
<dbReference type="PANTHER" id="PTHR11088:SF60">
    <property type="entry name" value="TRNA DIMETHYLALLYLTRANSFERASE"/>
    <property type="match status" value="1"/>
</dbReference>
<dbReference type="Pfam" id="PF01715">
    <property type="entry name" value="IPPT"/>
    <property type="match status" value="1"/>
</dbReference>
<dbReference type="SUPFAM" id="SSF52540">
    <property type="entry name" value="P-loop containing nucleoside triphosphate hydrolases"/>
    <property type="match status" value="2"/>
</dbReference>
<sequence length="297" mass="34068">MTQLAIIGATASGKSDLAIKIAKKIDAYILSIDSLSIYKEIDIVSAKPSKKELEDIKHFGIDFLHVDDYFSVDIFINLYKEVLQICKEQKKNLIIVGGTSFYLKSLIEGLSAIPKISKEQELHVEIKLKNLQQCYDFLYSLDREYMKNISAKDSYRIEKALLLHVGSSLTPSEWFRQNPPIPVIKNIDIFNIDVSRDILRERILNRTKKMLDLGLIDEVCHLEKKYTRLPHAMNSIGIVETLEYIDGFISKDEMIEKISTHTAQLAKRQQTFNRTQFDTIRSAPLEKLEDIILSTLA</sequence>
<feature type="chain" id="PRO_0000377341" description="tRNA dimethylallyltransferase">
    <location>
        <begin position="1"/>
        <end position="297"/>
    </location>
</feature>
<feature type="region of interest" description="Interaction with substrate tRNA" evidence="1">
    <location>
        <begin position="33"/>
        <end position="36"/>
    </location>
</feature>
<feature type="binding site" evidence="1">
    <location>
        <begin position="8"/>
        <end position="15"/>
    </location>
    <ligand>
        <name>ATP</name>
        <dbReference type="ChEBI" id="CHEBI:30616"/>
    </ligand>
</feature>
<feature type="binding site" evidence="1">
    <location>
        <begin position="10"/>
        <end position="15"/>
    </location>
    <ligand>
        <name>substrate</name>
    </ligand>
</feature>
<feature type="site" description="Interaction with substrate tRNA" evidence="1">
    <location>
        <position position="99"/>
    </location>
</feature>